<comment type="function">
    <text evidence="4">Component of the microsomal membrane bound fatty acid elongation system, which produces the 26-carbon very long-chain fatty acids (VLCFA) from palmitate. Catalyzes the reduction of the 3-ketoacyl-CoA intermediate that is formed in each cycle of fatty acid elongation. VLCFAs serve as precursors for ceramide and sphingolipids.</text>
</comment>
<comment type="catalytic activity">
    <reaction evidence="4">
        <text>a very-long-chain (3R)-3-hydroxyacyl-CoA + NADP(+) = a very-long-chain 3-oxoacyl-CoA + NADPH + H(+)</text>
        <dbReference type="Rhea" id="RHEA:48680"/>
        <dbReference type="ChEBI" id="CHEBI:15378"/>
        <dbReference type="ChEBI" id="CHEBI:57783"/>
        <dbReference type="ChEBI" id="CHEBI:58349"/>
        <dbReference type="ChEBI" id="CHEBI:85440"/>
        <dbReference type="ChEBI" id="CHEBI:90725"/>
        <dbReference type="EC" id="1.1.1.330"/>
    </reaction>
</comment>
<comment type="pathway">
    <text evidence="3">Lipid metabolism; fatty acid biosynthesis.</text>
</comment>
<comment type="subcellular location">
    <subcellularLocation>
        <location evidence="4">Endoplasmic reticulum membrane</location>
        <topology evidence="4">Single-pass membrane protein</topology>
    </subcellularLocation>
</comment>
<comment type="similarity">
    <text evidence="4">Belongs to the short-chain dehydrogenases/reductases (SDR) family.</text>
</comment>
<keyword id="KW-0256">Endoplasmic reticulum</keyword>
<keyword id="KW-0275">Fatty acid biosynthesis</keyword>
<keyword id="KW-0276">Fatty acid metabolism</keyword>
<keyword id="KW-0444">Lipid biosynthesis</keyword>
<keyword id="KW-0443">Lipid metabolism</keyword>
<keyword id="KW-0472">Membrane</keyword>
<keyword id="KW-0521">NADP</keyword>
<keyword id="KW-0560">Oxidoreductase</keyword>
<keyword id="KW-1185">Reference proteome</keyword>
<keyword id="KW-0812">Transmembrane</keyword>
<keyword id="KW-1133">Transmembrane helix</keyword>
<sequence length="341" mass="36903">MLRLIDSISDNCTVKTALYGALLLGVYKLTTFALSLVSLVLDLWVLPPVNFAKYGAKKGKWAVITGASDGIGKEYATQLAAKGLNVVLVSRTESKLVALAEEIESKYKVSTKVLAFDVSLDAESSYEDLAATIADLPVTVLVNNVGQSHSIPVPFLETDEKELRNIITINNTATLKITQVVAPKIVHTVASEKKKTRGLILTMGSFGGLLPTPYLATYSGSKAFLQSWSNALSGELQPQGVDVELVISYLVTSAMSKIRRSSASIPNPKAFVKSVLRNVGRRVGAQERFGTTTPYWAHAFMHFGIVNSVGVYSKIANSLNLGMHKSIRSRALKKAARQKKD</sequence>
<accession>A5DND6</accession>
<dbReference type="EC" id="1.1.1.330" evidence="4"/>
<dbReference type="EMBL" id="CH408160">
    <property type="protein sequence ID" value="EDK40689.1"/>
    <property type="molecule type" value="Genomic_DNA"/>
</dbReference>
<dbReference type="RefSeq" id="XP_001482832.1">
    <property type="nucleotide sequence ID" value="XM_001482782.1"/>
</dbReference>
<dbReference type="SMR" id="A5DND6"/>
<dbReference type="FunCoup" id="A5DND6">
    <property type="interactions" value="706"/>
</dbReference>
<dbReference type="STRING" id="294746.A5DND6"/>
<dbReference type="GeneID" id="5124925"/>
<dbReference type="KEGG" id="pgu:PGUG_04787"/>
<dbReference type="VEuPathDB" id="FungiDB:PGUG_04787"/>
<dbReference type="eggNOG" id="KOG1014">
    <property type="taxonomic scope" value="Eukaryota"/>
</dbReference>
<dbReference type="HOGENOM" id="CLU_010194_38_0_1"/>
<dbReference type="InParanoid" id="A5DND6"/>
<dbReference type="OMA" id="LVAPGMM"/>
<dbReference type="OrthoDB" id="5545019at2759"/>
<dbReference type="UniPathway" id="UPA00094"/>
<dbReference type="Proteomes" id="UP000001997">
    <property type="component" value="Unassembled WGS sequence"/>
</dbReference>
<dbReference type="GO" id="GO:0005789">
    <property type="term" value="C:endoplasmic reticulum membrane"/>
    <property type="evidence" value="ECO:0007669"/>
    <property type="project" value="UniProtKB-SubCell"/>
</dbReference>
<dbReference type="GO" id="GO:0045703">
    <property type="term" value="F:ketoreductase activity"/>
    <property type="evidence" value="ECO:0007669"/>
    <property type="project" value="UniProtKB-UniRule"/>
</dbReference>
<dbReference type="GO" id="GO:0141040">
    <property type="term" value="F:very-long-chain 3-oxoacyl-CoA reductase activity"/>
    <property type="evidence" value="ECO:0007669"/>
    <property type="project" value="UniProtKB-EC"/>
</dbReference>
<dbReference type="GO" id="GO:0030497">
    <property type="term" value="P:fatty acid elongation"/>
    <property type="evidence" value="ECO:0007669"/>
    <property type="project" value="UniProtKB-UniRule"/>
</dbReference>
<dbReference type="GO" id="GO:0030148">
    <property type="term" value="P:sphingolipid biosynthetic process"/>
    <property type="evidence" value="ECO:0007669"/>
    <property type="project" value="EnsemblFungi"/>
</dbReference>
<dbReference type="GO" id="GO:0042761">
    <property type="term" value="P:very long-chain fatty acid biosynthetic process"/>
    <property type="evidence" value="ECO:0007669"/>
    <property type="project" value="EnsemblFungi"/>
</dbReference>
<dbReference type="CDD" id="cd05356">
    <property type="entry name" value="17beta-HSD1_like_SDR_c"/>
    <property type="match status" value="1"/>
</dbReference>
<dbReference type="FunFam" id="3.40.50.720:FF:000317">
    <property type="entry name" value="Very-long-chain 3-oxoacyl-CoA reductase"/>
    <property type="match status" value="1"/>
</dbReference>
<dbReference type="Gene3D" id="3.40.50.720">
    <property type="entry name" value="NAD(P)-binding Rossmann-like Domain"/>
    <property type="match status" value="1"/>
</dbReference>
<dbReference type="HAMAP" id="MF_03107">
    <property type="entry name" value="3_ketoreductase"/>
    <property type="match status" value="1"/>
</dbReference>
<dbReference type="InterPro" id="IPR027533">
    <property type="entry name" value="3_ketoreductase_fungal"/>
</dbReference>
<dbReference type="InterPro" id="IPR036291">
    <property type="entry name" value="NAD(P)-bd_dom_sf"/>
</dbReference>
<dbReference type="InterPro" id="IPR020904">
    <property type="entry name" value="Sc_DH/Rdtase_CS"/>
</dbReference>
<dbReference type="InterPro" id="IPR002347">
    <property type="entry name" value="SDR_fam"/>
</dbReference>
<dbReference type="PANTHER" id="PTHR43086:SF2">
    <property type="entry name" value="HYDROXYSTEROID DEHYDROGENASE-LIKE PROTEIN 1"/>
    <property type="match status" value="1"/>
</dbReference>
<dbReference type="PANTHER" id="PTHR43086">
    <property type="entry name" value="VERY-LONG-CHAIN 3-OXOOACYL-COA REDUCTASE"/>
    <property type="match status" value="1"/>
</dbReference>
<dbReference type="Pfam" id="PF00106">
    <property type="entry name" value="adh_short"/>
    <property type="match status" value="1"/>
</dbReference>
<dbReference type="PIRSF" id="PIRSF000126">
    <property type="entry name" value="11-beta-HSD1"/>
    <property type="match status" value="1"/>
</dbReference>
<dbReference type="PRINTS" id="PR00081">
    <property type="entry name" value="GDHRDH"/>
</dbReference>
<dbReference type="SUPFAM" id="SSF51735">
    <property type="entry name" value="NAD(P)-binding Rossmann-fold domains"/>
    <property type="match status" value="1"/>
</dbReference>
<dbReference type="PROSITE" id="PS00061">
    <property type="entry name" value="ADH_SHORT"/>
    <property type="match status" value="1"/>
</dbReference>
<organism>
    <name type="scientific">Meyerozyma guilliermondii (strain ATCC 6260 / CBS 566 / DSM 6381 / JCM 1539 / NBRC 10279 / NRRL Y-324)</name>
    <name type="common">Yeast</name>
    <name type="synonym">Candida guilliermondii</name>
    <dbReference type="NCBI Taxonomy" id="294746"/>
    <lineage>
        <taxon>Eukaryota</taxon>
        <taxon>Fungi</taxon>
        <taxon>Dikarya</taxon>
        <taxon>Ascomycota</taxon>
        <taxon>Saccharomycotina</taxon>
        <taxon>Pichiomycetes</taxon>
        <taxon>Debaryomycetaceae</taxon>
        <taxon>Meyerozyma</taxon>
    </lineage>
</organism>
<reference key="1">
    <citation type="journal article" date="2009" name="Nature">
        <title>Evolution of pathogenicity and sexual reproduction in eight Candida genomes.</title>
        <authorList>
            <person name="Butler G."/>
            <person name="Rasmussen M.D."/>
            <person name="Lin M.F."/>
            <person name="Santos M.A.S."/>
            <person name="Sakthikumar S."/>
            <person name="Munro C.A."/>
            <person name="Rheinbay E."/>
            <person name="Grabherr M."/>
            <person name="Forche A."/>
            <person name="Reedy J.L."/>
            <person name="Agrafioti I."/>
            <person name="Arnaud M.B."/>
            <person name="Bates S."/>
            <person name="Brown A.J.P."/>
            <person name="Brunke S."/>
            <person name="Costanzo M.C."/>
            <person name="Fitzpatrick D.A."/>
            <person name="de Groot P.W.J."/>
            <person name="Harris D."/>
            <person name="Hoyer L.L."/>
            <person name="Hube B."/>
            <person name="Klis F.M."/>
            <person name="Kodira C."/>
            <person name="Lennard N."/>
            <person name="Logue M.E."/>
            <person name="Martin R."/>
            <person name="Neiman A.M."/>
            <person name="Nikolaou E."/>
            <person name="Quail M.A."/>
            <person name="Quinn J."/>
            <person name="Santos M.C."/>
            <person name="Schmitzberger F.F."/>
            <person name="Sherlock G."/>
            <person name="Shah P."/>
            <person name="Silverstein K.A.T."/>
            <person name="Skrzypek M.S."/>
            <person name="Soll D."/>
            <person name="Staggs R."/>
            <person name="Stansfield I."/>
            <person name="Stumpf M.P.H."/>
            <person name="Sudbery P.E."/>
            <person name="Srikantha T."/>
            <person name="Zeng Q."/>
            <person name="Berman J."/>
            <person name="Berriman M."/>
            <person name="Heitman J."/>
            <person name="Gow N.A.R."/>
            <person name="Lorenz M.C."/>
            <person name="Birren B.W."/>
            <person name="Kellis M."/>
            <person name="Cuomo C.A."/>
        </authorList>
    </citation>
    <scope>NUCLEOTIDE SEQUENCE [LARGE SCALE GENOMIC DNA]</scope>
    <source>
        <strain>ATCC 6260 / CBS 566 / DSM 6381 / JCM 1539 / NBRC 10279 / NRRL Y-324</strain>
    </source>
</reference>
<evidence type="ECO:0000250" key="1">
    <source>
        <dbReference type="UniProtKB" id="L0E2Z4"/>
    </source>
</evidence>
<evidence type="ECO:0000250" key="2">
    <source>
        <dbReference type="UniProtKB" id="O93868"/>
    </source>
</evidence>
<evidence type="ECO:0000250" key="3">
    <source>
        <dbReference type="UniProtKB" id="P38286"/>
    </source>
</evidence>
<evidence type="ECO:0000255" key="4">
    <source>
        <dbReference type="HAMAP-Rule" id="MF_03107"/>
    </source>
</evidence>
<protein>
    <recommendedName>
        <fullName evidence="4">Very-long-chain 3-oxoacyl-CoA reductase</fullName>
        <ecNumber evidence="4">1.1.1.330</ecNumber>
    </recommendedName>
    <alternativeName>
        <fullName evidence="4">3-ketoacyl-CoA reductase</fullName>
        <shortName evidence="4">3-ketoreductase</shortName>
        <shortName evidence="4">KAR</shortName>
    </alternativeName>
    <alternativeName>
        <fullName evidence="4">Microsomal beta-keto-reductase</fullName>
    </alternativeName>
</protein>
<feature type="chain" id="PRO_0000357318" description="Very-long-chain 3-oxoacyl-CoA reductase">
    <location>
        <begin position="1"/>
        <end position="341"/>
    </location>
</feature>
<feature type="transmembrane region" description="Helical" evidence="4">
    <location>
        <begin position="17"/>
        <end position="37"/>
    </location>
</feature>
<feature type="active site" description="Proton donor" evidence="2">
    <location>
        <position position="218"/>
    </location>
</feature>
<feature type="active site" description="Lowers pKa of active site Tyr" evidence="2">
    <location>
        <position position="222"/>
    </location>
</feature>
<feature type="binding site" evidence="1">
    <location>
        <position position="63"/>
    </location>
    <ligand>
        <name>NADP(+)</name>
        <dbReference type="ChEBI" id="CHEBI:58349"/>
    </ligand>
</feature>
<feature type="binding site" evidence="1">
    <location>
        <position position="117"/>
    </location>
    <ligand>
        <name>NADP(+)</name>
        <dbReference type="ChEBI" id="CHEBI:58349"/>
    </ligand>
</feature>
<feature type="binding site" evidence="2">
    <location>
        <position position="144"/>
    </location>
    <ligand>
        <name>NADP(+)</name>
        <dbReference type="ChEBI" id="CHEBI:58349"/>
    </ligand>
</feature>
<feature type="binding site" evidence="2">
    <location>
        <position position="218"/>
    </location>
    <ligand>
        <name>NADP(+)</name>
        <dbReference type="ChEBI" id="CHEBI:58349"/>
    </ligand>
</feature>
<feature type="binding site" evidence="2">
    <location>
        <position position="222"/>
    </location>
    <ligand>
        <name>NADP(+)</name>
        <dbReference type="ChEBI" id="CHEBI:58349"/>
    </ligand>
</feature>
<feature type="binding site" evidence="2">
    <location>
        <position position="251"/>
    </location>
    <ligand>
        <name>NADP(+)</name>
        <dbReference type="ChEBI" id="CHEBI:58349"/>
    </ligand>
</feature>
<feature type="binding site" evidence="1">
    <location>
        <position position="253"/>
    </location>
    <ligand>
        <name>NADP(+)</name>
        <dbReference type="ChEBI" id="CHEBI:58349"/>
    </ligand>
</feature>
<proteinExistence type="inferred from homology"/>
<name>MKAR_PICGU</name>
<gene>
    <name type="ORF">PGUG_04787</name>
</gene>